<proteinExistence type="evidence at transcript level"/>
<evidence type="ECO:0000255" key="1"/>
<evidence type="ECO:0000255" key="2">
    <source>
        <dbReference type="PROSITE-ProRule" id="PRU00604"/>
    </source>
</evidence>
<evidence type="ECO:0000269" key="3">
    <source>
    </source>
</evidence>
<evidence type="ECO:0000269" key="4">
    <source>
    </source>
</evidence>
<evidence type="ECO:0000303" key="5">
    <source>
    </source>
</evidence>
<evidence type="ECO:0000303" key="6">
    <source>
    </source>
</evidence>
<evidence type="ECO:0000305" key="7"/>
<evidence type="ECO:0000312" key="8">
    <source>
        <dbReference type="Araport" id="AT1G70370"/>
    </source>
</evidence>
<evidence type="ECO:0000312" key="9">
    <source>
        <dbReference type="EMBL" id="AAC18803.1"/>
    </source>
</evidence>
<accession>P92990</accession>
<accession>O64599</accession>
<accession>Q0WV83</accession>
<accession>Q8H7B8</accession>
<accession>Q93ZQ4</accession>
<protein>
    <recommendedName>
        <fullName evidence="6">Polygalacturonase 1 beta-like protein 3</fullName>
        <shortName evidence="6">AtPGL3</shortName>
    </recommendedName>
    <alternativeName>
        <fullName>Aromatic-rich glycoprotein JP650</fullName>
    </alternativeName>
    <alternativeName>
        <fullName evidence="6">PG1beta-like protein 3</fullName>
    </alternativeName>
    <alternativeName>
        <fullName evidence="5">Polygalacturonase 2</fullName>
    </alternativeName>
    <alternativeName>
        <fullName>Probable polygalacturonase non-catalytic subunit JP650</fullName>
    </alternativeName>
</protein>
<feature type="signal peptide" evidence="1">
    <location>
        <begin position="1"/>
        <end position="23"/>
    </location>
</feature>
<feature type="chain" id="PRO_0000042954" description="Polygalacturonase 1 beta-like protein 3">
    <location>
        <begin position="24"/>
        <end position="626"/>
    </location>
</feature>
<feature type="repeat" description="FXXY 1" evidence="7">
    <location>
        <begin position="117"/>
        <end position="120"/>
    </location>
</feature>
<feature type="repeat" description="FXXY 2" evidence="7">
    <location>
        <begin position="125"/>
        <end position="128"/>
    </location>
</feature>
<feature type="repeat" description="FXXY 3" evidence="7">
    <location>
        <begin position="139"/>
        <end position="142"/>
    </location>
</feature>
<feature type="repeat" description="FXXY 4" evidence="7">
    <location>
        <begin position="153"/>
        <end position="156"/>
    </location>
</feature>
<feature type="repeat" description="FXXY 5" evidence="7">
    <location>
        <begin position="167"/>
        <end position="170"/>
    </location>
</feature>
<feature type="repeat" description="FXXY 6" evidence="7">
    <location>
        <begin position="181"/>
        <end position="184"/>
    </location>
</feature>
<feature type="repeat" description="FXXY 7" evidence="7">
    <location>
        <begin position="195"/>
        <end position="198"/>
    </location>
</feature>
<feature type="repeat" description="FXXY 8" evidence="7">
    <location>
        <begin position="209"/>
        <end position="212"/>
    </location>
</feature>
<feature type="repeat" description="FXXY 9" evidence="7">
    <location>
        <begin position="223"/>
        <end position="226"/>
    </location>
</feature>
<feature type="repeat" description="FXXY 10" evidence="7">
    <location>
        <begin position="238"/>
        <end position="241"/>
    </location>
</feature>
<feature type="repeat" description="FXXY 11" evidence="7">
    <location>
        <begin position="252"/>
        <end position="255"/>
    </location>
</feature>
<feature type="repeat" description="FXXY 12" evidence="7">
    <location>
        <begin position="266"/>
        <end position="269"/>
    </location>
</feature>
<feature type="repeat" description="FXXY 13" evidence="7">
    <location>
        <begin position="280"/>
        <end position="283"/>
    </location>
</feature>
<feature type="repeat" description="FXXY 14" evidence="7">
    <location>
        <begin position="294"/>
        <end position="297"/>
    </location>
</feature>
<feature type="repeat" description="FXXY 15" evidence="7">
    <location>
        <begin position="308"/>
        <end position="311"/>
    </location>
</feature>
<feature type="repeat" description="FXXY 16" evidence="7">
    <location>
        <begin position="322"/>
        <end position="325"/>
    </location>
</feature>
<feature type="repeat" description="FXXY 17" evidence="7">
    <location>
        <begin position="336"/>
        <end position="339"/>
    </location>
</feature>
<feature type="repeat" description="FXXY 18" evidence="7">
    <location>
        <begin position="350"/>
        <end position="353"/>
    </location>
</feature>
<feature type="repeat" description="FXXY 19" evidence="7">
    <location>
        <begin position="364"/>
        <end position="367"/>
    </location>
</feature>
<feature type="repeat" description="FXXY 20" evidence="7">
    <location>
        <begin position="373"/>
        <end position="376"/>
    </location>
</feature>
<feature type="repeat" description="FXXY 21" evidence="7">
    <location>
        <begin position="383"/>
        <end position="386"/>
    </location>
</feature>
<feature type="domain" description="BURP" evidence="2">
    <location>
        <begin position="411"/>
        <end position="625"/>
    </location>
</feature>
<feature type="glycosylation site" description="N-linked (GlcNAc...) asparagine" evidence="1">
    <location>
        <position position="124"/>
    </location>
</feature>
<feature type="glycosylation site" description="N-linked (GlcNAc...) asparagine" evidence="1">
    <location>
        <position position="141"/>
    </location>
</feature>
<feature type="glycosylation site" description="N-linked (GlcNAc...) asparagine" evidence="1">
    <location>
        <position position="277"/>
    </location>
</feature>
<feature type="glycosylation site" description="N-linked (GlcNAc...) asparagine" evidence="1">
    <location>
        <position position="370"/>
    </location>
</feature>
<feature type="glycosylation site" description="N-linked (GlcNAc...) asparagine" evidence="1">
    <location>
        <position position="387"/>
    </location>
</feature>
<feature type="glycosylation site" description="N-linked (GlcNAc...) asparagine" evidence="1">
    <location>
        <position position="465"/>
    </location>
</feature>
<feature type="sequence conflict" description="In Ref. 6; AAN60310." evidence="7" ref="6">
    <original>A</original>
    <variation>S</variation>
    <location>
        <position position="70"/>
    </location>
</feature>
<feature type="sequence conflict" description="In Ref. 1; AAB39546." evidence="7" ref="1">
    <original>G</original>
    <variation>A</variation>
    <location>
        <position position="242"/>
    </location>
</feature>
<sequence>MLKQFLLLQSFSFFLFNVVIVGGRTFGGGFSAEENPFTPKASLVRYWNKEIRGQSPRSEFLISKASPLNAVDSATFSKLAAANSLPTRFPDFCSAANLFCFPDLGASLEKHDDDVKFSVYDQKNFTNYGNARAGGADSFKNYSKDGNVVTDSFRRYSRNAAGHDDKFTVYGENSNVVEEGFNSYGTFGTGGAGDFTNYQNNVNNPTSRFTAYSDGGNGRSQTFKTYTHEANAGNGQSFTSYGKNGNGVPNEFTSYGVSSNVIGSGFSNYGESGNAANDTFTSYGSDGNVPQNNFNNYGASGNAAVDTFANYRDKANVGDDSFSSYAKDSNSEKVNFVNYGQSFNPGSETFTGYGKGAEGSKLSFKTYTPNSTFKDYAKKGVAFAKYNVSTTTANTVGDGKTVNKWIEPGKFFRESSLKEGTVIPMPDIKDKMPKRSFLPRSIITKLPFSTSKLGEIKRIFHAVENSTMGGIITDAVTECERPPSVGETKRCVGSAEDMIDFATSVLGRSVVLRTTENVAGSKEKVVIGKVNGINGGKLTKAVSCHQSLYPYLLYYCHSVPKVRVYEADLLELNSKKKINHGIAICHMDTSSWGPSHGAFLALGSKPGRIEVCHWIFENDMNWAIAD</sequence>
<organism>
    <name type="scientific">Arabidopsis thaliana</name>
    <name type="common">Mouse-ear cress</name>
    <dbReference type="NCBI Taxonomy" id="3702"/>
    <lineage>
        <taxon>Eukaryota</taxon>
        <taxon>Viridiplantae</taxon>
        <taxon>Streptophyta</taxon>
        <taxon>Embryophyta</taxon>
        <taxon>Tracheophyta</taxon>
        <taxon>Spermatophyta</taxon>
        <taxon>Magnoliopsida</taxon>
        <taxon>eudicotyledons</taxon>
        <taxon>Gunneridae</taxon>
        <taxon>Pentapetalae</taxon>
        <taxon>rosids</taxon>
        <taxon>malvids</taxon>
        <taxon>Brassicales</taxon>
        <taxon>Brassicaceae</taxon>
        <taxon>Camelineae</taxon>
        <taxon>Arabidopsis</taxon>
    </lineage>
</organism>
<comment type="function">
    <text evidence="3">Involved in cell size determination. May serve as a chaperone for expansins through the secretory pathway.</text>
</comment>
<comment type="subcellular location">
    <subcellularLocation>
        <location evidence="3">Secreted</location>
        <location evidence="3">Extracellular space</location>
        <location evidence="3">Apoplast</location>
    </subcellularLocation>
    <subcellularLocation>
        <location evidence="3">Secreted</location>
        <location evidence="3">Cell wall</location>
    </subcellularLocation>
</comment>
<comment type="tissue specificity">
    <text evidence="3">Expressed in flowers and stems. Detected in trichomes, guard cells, root vascular tissue, root hairs, pollen sacs, sepals and styles of pistils.</text>
</comment>
<comment type="developmental stage">
    <text evidence="3">Barely detectable in 6 days after-germination (DAG) seedlings, but highly expressed in 14 DAG seedlings.</text>
</comment>
<comment type="domain">
    <text evidence="3 4">The BURP domain located at the C-terminus has not been identified in non-plant proteins (PubMed:9790599). It is critical for PGL3's role in cell growth (PubMed:26106400).</text>
</comment>
<comment type="disruption phenotype">
    <text evidence="3">Slightly reduced size of the plant. Atpgl1, atpgl2 and atpgl3 triple mutants produce smaller leaves and petioles.</text>
</comment>
<comment type="miscellaneous">
    <text evidence="3">Unlike the tomato GP1, the BURP domain of AtPGL3 is not cleaved when the protein is secreted to the cell wall.</text>
</comment>
<comment type="sequence caution" evidence="7">
    <conflict type="frameshift">
        <sequence resource="EMBL-CDS" id="AAL08244"/>
    </conflict>
</comment>
<comment type="sequence caution" evidence="7">
    <conflict type="frameshift">
        <sequence resource="EMBL-CDS" id="AAN18083"/>
    </conflict>
</comment>
<keyword id="KW-0052">Apoplast</keyword>
<keyword id="KW-0134">Cell wall</keyword>
<keyword id="KW-0325">Glycoprotein</keyword>
<keyword id="KW-1185">Reference proteome</keyword>
<keyword id="KW-0677">Repeat</keyword>
<keyword id="KW-0964">Secreted</keyword>
<keyword id="KW-0732">Signal</keyword>
<dbReference type="EMBL" id="U63373">
    <property type="protein sequence ID" value="AAB39546.1"/>
    <property type="molecule type" value="mRNA"/>
</dbReference>
<dbReference type="EMBL" id="AC003671">
    <property type="protein sequence ID" value="AAC18803.1"/>
    <property type="molecule type" value="Genomic_DNA"/>
</dbReference>
<dbReference type="EMBL" id="CP002684">
    <property type="protein sequence ID" value="AEE35050.1"/>
    <property type="molecule type" value="Genomic_DNA"/>
</dbReference>
<dbReference type="EMBL" id="CP002684">
    <property type="protein sequence ID" value="AEE35051.1"/>
    <property type="molecule type" value="Genomic_DNA"/>
</dbReference>
<dbReference type="EMBL" id="AY056388">
    <property type="protein sequence ID" value="AAL08244.1"/>
    <property type="status" value="ALT_FRAME"/>
    <property type="molecule type" value="mRNA"/>
</dbReference>
<dbReference type="EMBL" id="BT000514">
    <property type="protein sequence ID" value="AAN18083.1"/>
    <property type="status" value="ALT_FRAME"/>
    <property type="molecule type" value="mRNA"/>
</dbReference>
<dbReference type="EMBL" id="AK226888">
    <property type="protein sequence ID" value="BAE98965.1"/>
    <property type="molecule type" value="mRNA"/>
</dbReference>
<dbReference type="EMBL" id="AF083752">
    <property type="protein sequence ID" value="AAN60310.1"/>
    <property type="molecule type" value="mRNA"/>
</dbReference>
<dbReference type="PIR" id="T01485">
    <property type="entry name" value="T01485"/>
</dbReference>
<dbReference type="RefSeq" id="NP_001185361.1">
    <property type="nucleotide sequence ID" value="NM_001198432.1"/>
</dbReference>
<dbReference type="RefSeq" id="NP_177194.1">
    <property type="nucleotide sequence ID" value="NM_105705.4"/>
</dbReference>
<dbReference type="FunCoup" id="P92990">
    <property type="interactions" value="437"/>
</dbReference>
<dbReference type="STRING" id="3702.P92990"/>
<dbReference type="GlyCosmos" id="P92990">
    <property type="glycosylation" value="6 sites, No reported glycans"/>
</dbReference>
<dbReference type="GlyGen" id="P92990">
    <property type="glycosylation" value="6 sites"/>
</dbReference>
<dbReference type="PaxDb" id="3702-AT1G70370.1"/>
<dbReference type="ProteomicsDB" id="236724"/>
<dbReference type="EnsemblPlants" id="AT1G70370.1">
    <property type="protein sequence ID" value="AT1G70370.1"/>
    <property type="gene ID" value="AT1G70370"/>
</dbReference>
<dbReference type="EnsemblPlants" id="AT1G70370.2">
    <property type="protein sequence ID" value="AT1G70370.2"/>
    <property type="gene ID" value="AT1G70370"/>
</dbReference>
<dbReference type="GeneID" id="843373"/>
<dbReference type="Gramene" id="AT1G70370.1">
    <property type="protein sequence ID" value="AT1G70370.1"/>
    <property type="gene ID" value="AT1G70370"/>
</dbReference>
<dbReference type="Gramene" id="AT1G70370.2">
    <property type="protein sequence ID" value="AT1G70370.2"/>
    <property type="gene ID" value="AT1G70370"/>
</dbReference>
<dbReference type="KEGG" id="ath:AT1G70370"/>
<dbReference type="Araport" id="AT1G70370"/>
<dbReference type="TAIR" id="AT1G70370">
    <property type="gene designation" value="PG2"/>
</dbReference>
<dbReference type="eggNOG" id="ENOG502QT2V">
    <property type="taxonomic scope" value="Eukaryota"/>
</dbReference>
<dbReference type="HOGENOM" id="CLU_011822_5_0_1"/>
<dbReference type="InParanoid" id="P92990"/>
<dbReference type="OMA" id="FKRYGKG"/>
<dbReference type="PhylomeDB" id="P92990"/>
<dbReference type="PRO" id="PR:P92990"/>
<dbReference type="Proteomes" id="UP000006548">
    <property type="component" value="Chromosome 1"/>
</dbReference>
<dbReference type="ExpressionAtlas" id="P92990">
    <property type="expression patterns" value="baseline and differential"/>
</dbReference>
<dbReference type="GO" id="GO:0048046">
    <property type="term" value="C:apoplast"/>
    <property type="evidence" value="ECO:0007669"/>
    <property type="project" value="UniProtKB-SubCell"/>
</dbReference>
<dbReference type="GO" id="GO:0009505">
    <property type="term" value="C:plant-type cell wall"/>
    <property type="evidence" value="ECO:0000314"/>
    <property type="project" value="TAIR"/>
</dbReference>
<dbReference type="GO" id="GO:0042547">
    <property type="term" value="P:cell wall modification involved in multidimensional cell growth"/>
    <property type="evidence" value="ECO:0000315"/>
    <property type="project" value="TAIR"/>
</dbReference>
<dbReference type="GO" id="GO:0009827">
    <property type="term" value="P:plant-type cell wall modification"/>
    <property type="evidence" value="ECO:0000315"/>
    <property type="project" value="TAIR"/>
</dbReference>
<dbReference type="InterPro" id="IPR004873">
    <property type="entry name" value="BURP_dom"/>
</dbReference>
<dbReference type="InterPro" id="IPR051897">
    <property type="entry name" value="PG-associated_BURP"/>
</dbReference>
<dbReference type="PANTHER" id="PTHR31458:SF10">
    <property type="entry name" value="POLYGALACTURONASE 1 BETA-LIKE PROTEIN 1-RELATED"/>
    <property type="match status" value="1"/>
</dbReference>
<dbReference type="PANTHER" id="PTHR31458">
    <property type="entry name" value="POLYGALACTURONASE 1 BETA-LIKE PROTEIN 2"/>
    <property type="match status" value="1"/>
</dbReference>
<dbReference type="Pfam" id="PF03181">
    <property type="entry name" value="BURP"/>
    <property type="match status" value="1"/>
</dbReference>
<dbReference type="SMART" id="SM01045">
    <property type="entry name" value="BURP"/>
    <property type="match status" value="1"/>
</dbReference>
<dbReference type="PROSITE" id="PS51277">
    <property type="entry name" value="BURP"/>
    <property type="match status" value="1"/>
</dbReference>
<gene>
    <name evidence="6" type="primary">PGL3</name>
    <name type="synonym">JP650</name>
    <name evidence="5" type="synonym">PG2</name>
    <name evidence="8" type="ordered locus">At1g70370</name>
    <name evidence="9" type="ORF">F17O7.9</name>
</gene>
<reference key="1">
    <citation type="submission" date="1996-07" db="EMBL/GenBank/DDBJ databases">
        <title>Arabidopsis aromatic rich glycoprotein JP650.</title>
        <authorList>
            <person name="Watson C.F."/>
            <person name="Schuchman B."/>
            <person name="Liu J."/>
            <person name="DellaPenna D."/>
        </authorList>
    </citation>
    <scope>NUCLEOTIDE SEQUENCE [MRNA]</scope>
</reference>
<reference key="2">
    <citation type="journal article" date="2000" name="Nature">
        <title>Sequence and analysis of chromosome 1 of the plant Arabidopsis thaliana.</title>
        <authorList>
            <person name="Theologis A."/>
            <person name="Ecker J.R."/>
            <person name="Palm C.J."/>
            <person name="Federspiel N.A."/>
            <person name="Kaul S."/>
            <person name="White O."/>
            <person name="Alonso J."/>
            <person name="Altafi H."/>
            <person name="Araujo R."/>
            <person name="Bowman C.L."/>
            <person name="Brooks S.Y."/>
            <person name="Buehler E."/>
            <person name="Chan A."/>
            <person name="Chao Q."/>
            <person name="Chen H."/>
            <person name="Cheuk R.F."/>
            <person name="Chin C.W."/>
            <person name="Chung M.K."/>
            <person name="Conn L."/>
            <person name="Conway A.B."/>
            <person name="Conway A.R."/>
            <person name="Creasy T.H."/>
            <person name="Dewar K."/>
            <person name="Dunn P."/>
            <person name="Etgu P."/>
            <person name="Feldblyum T.V."/>
            <person name="Feng J.-D."/>
            <person name="Fong B."/>
            <person name="Fujii C.Y."/>
            <person name="Gill J.E."/>
            <person name="Goldsmith A.D."/>
            <person name="Haas B."/>
            <person name="Hansen N.F."/>
            <person name="Hughes B."/>
            <person name="Huizar L."/>
            <person name="Hunter J.L."/>
            <person name="Jenkins J."/>
            <person name="Johnson-Hopson C."/>
            <person name="Khan S."/>
            <person name="Khaykin E."/>
            <person name="Kim C.J."/>
            <person name="Koo H.L."/>
            <person name="Kremenetskaia I."/>
            <person name="Kurtz D.B."/>
            <person name="Kwan A."/>
            <person name="Lam B."/>
            <person name="Langin-Hooper S."/>
            <person name="Lee A."/>
            <person name="Lee J.M."/>
            <person name="Lenz C.A."/>
            <person name="Li J.H."/>
            <person name="Li Y.-P."/>
            <person name="Lin X."/>
            <person name="Liu S.X."/>
            <person name="Liu Z.A."/>
            <person name="Luros J.S."/>
            <person name="Maiti R."/>
            <person name="Marziali A."/>
            <person name="Militscher J."/>
            <person name="Miranda M."/>
            <person name="Nguyen M."/>
            <person name="Nierman W.C."/>
            <person name="Osborne B.I."/>
            <person name="Pai G."/>
            <person name="Peterson J."/>
            <person name="Pham P.K."/>
            <person name="Rizzo M."/>
            <person name="Rooney T."/>
            <person name="Rowley D."/>
            <person name="Sakano H."/>
            <person name="Salzberg S.L."/>
            <person name="Schwartz J.R."/>
            <person name="Shinn P."/>
            <person name="Southwick A.M."/>
            <person name="Sun H."/>
            <person name="Tallon L.J."/>
            <person name="Tambunga G."/>
            <person name="Toriumi M.J."/>
            <person name="Town C.D."/>
            <person name="Utterback T."/>
            <person name="Van Aken S."/>
            <person name="Vaysberg M."/>
            <person name="Vysotskaia V.S."/>
            <person name="Walker M."/>
            <person name="Wu D."/>
            <person name="Yu G."/>
            <person name="Fraser C.M."/>
            <person name="Venter J.C."/>
            <person name="Davis R.W."/>
        </authorList>
    </citation>
    <scope>NUCLEOTIDE SEQUENCE [LARGE SCALE GENOMIC DNA]</scope>
    <source>
        <strain>cv. Columbia</strain>
    </source>
</reference>
<reference key="3">
    <citation type="journal article" date="2017" name="Plant J.">
        <title>Araport11: a complete reannotation of the Arabidopsis thaliana reference genome.</title>
        <authorList>
            <person name="Cheng C.Y."/>
            <person name="Krishnakumar V."/>
            <person name="Chan A.P."/>
            <person name="Thibaud-Nissen F."/>
            <person name="Schobel S."/>
            <person name="Town C.D."/>
        </authorList>
    </citation>
    <scope>GENOME REANNOTATION</scope>
    <source>
        <strain>cv. Columbia</strain>
    </source>
</reference>
<reference key="4">
    <citation type="journal article" date="2003" name="Science">
        <title>Empirical analysis of transcriptional activity in the Arabidopsis genome.</title>
        <authorList>
            <person name="Yamada K."/>
            <person name="Lim J."/>
            <person name="Dale J.M."/>
            <person name="Chen H."/>
            <person name="Shinn P."/>
            <person name="Palm C.J."/>
            <person name="Southwick A.M."/>
            <person name="Wu H.C."/>
            <person name="Kim C.J."/>
            <person name="Nguyen M."/>
            <person name="Pham P.K."/>
            <person name="Cheuk R.F."/>
            <person name="Karlin-Newmann G."/>
            <person name="Liu S.X."/>
            <person name="Lam B."/>
            <person name="Sakano H."/>
            <person name="Wu T."/>
            <person name="Yu G."/>
            <person name="Miranda M."/>
            <person name="Quach H.L."/>
            <person name="Tripp M."/>
            <person name="Chang C.H."/>
            <person name="Lee J.M."/>
            <person name="Toriumi M.J."/>
            <person name="Chan M.M."/>
            <person name="Tang C.C."/>
            <person name="Onodera C.S."/>
            <person name="Deng J.M."/>
            <person name="Akiyama K."/>
            <person name="Ansari Y."/>
            <person name="Arakawa T."/>
            <person name="Banh J."/>
            <person name="Banno F."/>
            <person name="Bowser L."/>
            <person name="Brooks S.Y."/>
            <person name="Carninci P."/>
            <person name="Chao Q."/>
            <person name="Choy N."/>
            <person name="Enju A."/>
            <person name="Goldsmith A.D."/>
            <person name="Gurjal M."/>
            <person name="Hansen N.F."/>
            <person name="Hayashizaki Y."/>
            <person name="Johnson-Hopson C."/>
            <person name="Hsuan V.W."/>
            <person name="Iida K."/>
            <person name="Karnes M."/>
            <person name="Khan S."/>
            <person name="Koesema E."/>
            <person name="Ishida J."/>
            <person name="Jiang P.X."/>
            <person name="Jones T."/>
            <person name="Kawai J."/>
            <person name="Kamiya A."/>
            <person name="Meyers C."/>
            <person name="Nakajima M."/>
            <person name="Narusaka M."/>
            <person name="Seki M."/>
            <person name="Sakurai T."/>
            <person name="Satou M."/>
            <person name="Tamse R."/>
            <person name="Vaysberg M."/>
            <person name="Wallender E.K."/>
            <person name="Wong C."/>
            <person name="Yamamura Y."/>
            <person name="Yuan S."/>
            <person name="Shinozaki K."/>
            <person name="Davis R.W."/>
            <person name="Theologis A."/>
            <person name="Ecker J.R."/>
        </authorList>
    </citation>
    <scope>NUCLEOTIDE SEQUENCE [LARGE SCALE MRNA]</scope>
    <source>
        <strain>cv. Columbia</strain>
    </source>
</reference>
<reference key="5">
    <citation type="submission" date="2006-07" db="EMBL/GenBank/DDBJ databases">
        <title>Large-scale analysis of RIKEN Arabidopsis full-length (RAFL) cDNAs.</title>
        <authorList>
            <person name="Totoki Y."/>
            <person name="Seki M."/>
            <person name="Ishida J."/>
            <person name="Nakajima M."/>
            <person name="Enju A."/>
            <person name="Kamiya A."/>
            <person name="Narusaka M."/>
            <person name="Shin-i T."/>
            <person name="Nakagawa M."/>
            <person name="Sakamoto N."/>
            <person name="Oishi K."/>
            <person name="Kohara Y."/>
            <person name="Kobayashi M."/>
            <person name="Toyoda A."/>
            <person name="Sakaki Y."/>
            <person name="Sakurai T."/>
            <person name="Iida K."/>
            <person name="Akiyama K."/>
            <person name="Satou M."/>
            <person name="Toyoda T."/>
            <person name="Konagaya A."/>
            <person name="Carninci P."/>
            <person name="Kawai J."/>
            <person name="Hayashizaki Y."/>
            <person name="Shinozaki K."/>
        </authorList>
    </citation>
    <scope>NUCLEOTIDE SEQUENCE [LARGE SCALE MRNA]</scope>
    <source>
        <strain>cv. Columbia</strain>
    </source>
</reference>
<reference key="6">
    <citation type="submission" date="1998-08" db="EMBL/GenBank/DDBJ databases">
        <title>Signal peptide selection derived cDNAs from Arabidopsis thaliana leaves and guard cells.</title>
        <authorList>
            <person name="Stracke R."/>
            <person name="Palme K."/>
        </authorList>
    </citation>
    <scope>NUCLEOTIDE SEQUENCE [LARGE SCALE MRNA] OF 1-226</scope>
</reference>
<reference key="7">
    <citation type="journal article" date="1998" name="Mol. Gen. Genet.">
        <title>A conserved BURP domain defines a novel group of plant proteins with unusual primary structures.</title>
        <authorList>
            <person name="Hattori J."/>
            <person name="Boutilier K.A."/>
            <person name="van Lookeren Campagne M.M."/>
            <person name="Miki B.L."/>
        </authorList>
    </citation>
    <scope>DOMAIN</scope>
</reference>
<reference key="8">
    <citation type="journal article" date="2009" name="Plant Mol. Biol.">
        <title>The BURP domain protein AtUSPL1 of Arabidopsis thaliana is destined to the protein storage vacuoles and overexpression of the cognate gene distorts seed development.</title>
        <authorList>
            <person name="Van Son L."/>
            <person name="Tiedemann J."/>
            <person name="Rutten T."/>
            <person name="Hillmer S."/>
            <person name="Hinz G."/>
            <person name="Zank T."/>
            <person name="Manteuffel R."/>
            <person name="Baeumlein H."/>
        </authorList>
    </citation>
    <scope>GENE FAMILY</scope>
    <scope>NOMENCLATURE</scope>
</reference>
<reference key="9">
    <citation type="journal article" date="2015" name="Front. Plant Sci.">
        <title>AtPGL3 is an Arabidopsis BURP domain protein that is localized to the cell wall and promotes cell enlargement.</title>
        <authorList>
            <person name="Park J."/>
            <person name="Cui Y."/>
            <person name="Kang B.H."/>
        </authorList>
    </citation>
    <scope>FUNCTION</scope>
    <scope>GENE FAMILY</scope>
    <scope>NOMENCLATURE</scope>
    <scope>TISSUE SPECIFICITY</scope>
    <scope>DEVELOPMENTAL STAGE</scope>
    <scope>DISRUPTION PHENOTYPE</scope>
    <scope>SUBCELLULAR LOCATION</scope>
    <scope>DOMAIN</scope>
</reference>
<name>PGL3_ARATH</name>